<feature type="chain" id="PRO_0000342359" description="Actin-related protein 3B">
    <location>
        <begin position="1"/>
        <end position="418"/>
    </location>
</feature>
<feature type="splice variant" id="VSP_034419" description="In isoform 2." evidence="2">
    <location>
        <begin position="1"/>
        <end position="88"/>
    </location>
</feature>
<protein>
    <recommendedName>
        <fullName>Actin-related protein 3B</fullName>
    </recommendedName>
    <alternativeName>
        <fullName>ARP3-beta</fullName>
    </alternativeName>
    <alternativeName>
        <fullName>Actin-like protein 3B</fullName>
    </alternativeName>
</protein>
<evidence type="ECO:0000250" key="1"/>
<evidence type="ECO:0000303" key="2">
    <source>
    </source>
</evidence>
<evidence type="ECO:0000305" key="3"/>
<organism>
    <name type="scientific">Mus musculus</name>
    <name type="common">Mouse</name>
    <dbReference type="NCBI Taxonomy" id="10090"/>
    <lineage>
        <taxon>Eukaryota</taxon>
        <taxon>Metazoa</taxon>
        <taxon>Chordata</taxon>
        <taxon>Craniata</taxon>
        <taxon>Vertebrata</taxon>
        <taxon>Euteleostomi</taxon>
        <taxon>Mammalia</taxon>
        <taxon>Eutheria</taxon>
        <taxon>Euarchontoglires</taxon>
        <taxon>Glires</taxon>
        <taxon>Rodentia</taxon>
        <taxon>Myomorpha</taxon>
        <taxon>Muroidea</taxon>
        <taxon>Muridae</taxon>
        <taxon>Murinae</taxon>
        <taxon>Mus</taxon>
        <taxon>Mus</taxon>
    </lineage>
</organism>
<dbReference type="EMBL" id="BC053106">
    <property type="status" value="NOT_ANNOTATED_CDS"/>
    <property type="molecule type" value="mRNA"/>
</dbReference>
<dbReference type="EMBL" id="BC082279">
    <property type="protein sequence ID" value="AAH82279.1"/>
    <property type="molecule type" value="mRNA"/>
</dbReference>
<dbReference type="CCDS" id="CCDS19136.1">
    <molecule id="Q641P0-1"/>
</dbReference>
<dbReference type="CCDS" id="CCDS80232.1">
    <molecule id="Q641P0-2"/>
</dbReference>
<dbReference type="RefSeq" id="NP_001004365.1">
    <molecule id="Q641P0-1"/>
    <property type="nucleotide sequence ID" value="NM_001004365.3"/>
</dbReference>
<dbReference type="RefSeq" id="NP_001297433.1">
    <molecule id="Q641P0-2"/>
    <property type="nucleotide sequence ID" value="NM_001310504.2"/>
</dbReference>
<dbReference type="RefSeq" id="NP_001411675.1">
    <molecule id="Q641P0-2"/>
    <property type="nucleotide sequence ID" value="NM_001424746.1"/>
</dbReference>
<dbReference type="RefSeq" id="XP_036021015.1">
    <molecule id="Q641P0-2"/>
    <property type="nucleotide sequence ID" value="XM_036165122.1"/>
</dbReference>
<dbReference type="SMR" id="Q641P0"/>
<dbReference type="BioGRID" id="232471">
    <property type="interactions" value="3"/>
</dbReference>
<dbReference type="FunCoup" id="Q641P0">
    <property type="interactions" value="1577"/>
</dbReference>
<dbReference type="IntAct" id="Q641P0">
    <property type="interactions" value="3"/>
</dbReference>
<dbReference type="MINT" id="Q641P0"/>
<dbReference type="STRING" id="10090.ENSMUSP00000085578"/>
<dbReference type="GlyGen" id="Q641P0">
    <property type="glycosylation" value="1 site, 1 O-linked glycan (1 site)"/>
</dbReference>
<dbReference type="iPTMnet" id="Q641P0"/>
<dbReference type="PhosphoSitePlus" id="Q641P0"/>
<dbReference type="SwissPalm" id="Q641P0"/>
<dbReference type="jPOST" id="Q641P0"/>
<dbReference type="PaxDb" id="10090-ENSMUSP00000085578"/>
<dbReference type="PeptideAtlas" id="Q641P0"/>
<dbReference type="ProteomicsDB" id="283244">
    <molecule id="Q641P0-1"/>
</dbReference>
<dbReference type="ProteomicsDB" id="283245">
    <molecule id="Q641P0-2"/>
</dbReference>
<dbReference type="DNASU" id="242894"/>
<dbReference type="Ensembl" id="ENSMUST00000088244.6">
    <molecule id="Q641P0-1"/>
    <property type="protein sequence ID" value="ENSMUSP00000085578.5"/>
    <property type="gene ID" value="ENSMUSG00000056367.15"/>
</dbReference>
<dbReference type="Ensembl" id="ENSMUST00000128727.8">
    <molecule id="Q641P0-2"/>
    <property type="protein sequence ID" value="ENSMUSP00000121629.2"/>
    <property type="gene ID" value="ENSMUSG00000056367.15"/>
</dbReference>
<dbReference type="GeneID" id="242894"/>
<dbReference type="KEGG" id="mmu:242894"/>
<dbReference type="UCSC" id="uc008wtc.1">
    <molecule id="Q641P0-1"/>
    <property type="organism name" value="mouse"/>
</dbReference>
<dbReference type="AGR" id="MGI:2661120"/>
<dbReference type="CTD" id="57180"/>
<dbReference type="MGI" id="MGI:2661120">
    <property type="gene designation" value="Actr3b"/>
</dbReference>
<dbReference type="VEuPathDB" id="HostDB:ENSMUSG00000056367"/>
<dbReference type="eggNOG" id="KOG0678">
    <property type="taxonomic scope" value="Eukaryota"/>
</dbReference>
<dbReference type="GeneTree" id="ENSGT00940000158304"/>
<dbReference type="HOGENOM" id="CLU_027965_3_0_1"/>
<dbReference type="InParanoid" id="Q641P0"/>
<dbReference type="OMA" id="DVMEEYW"/>
<dbReference type="OrthoDB" id="421448at2759"/>
<dbReference type="PhylomeDB" id="Q641P0"/>
<dbReference type="TreeFam" id="TF300644"/>
<dbReference type="BioGRID-ORCS" id="242894">
    <property type="hits" value="1 hit in 77 CRISPR screens"/>
</dbReference>
<dbReference type="ChiTaRS" id="Actr3b">
    <property type="organism name" value="mouse"/>
</dbReference>
<dbReference type="PRO" id="PR:Q641P0"/>
<dbReference type="Proteomes" id="UP000000589">
    <property type="component" value="Chromosome 5"/>
</dbReference>
<dbReference type="RNAct" id="Q641P0">
    <property type="molecule type" value="protein"/>
</dbReference>
<dbReference type="Bgee" id="ENSMUSG00000056367">
    <property type="expression patterns" value="Expressed in Ammon's horn and 184 other cell types or tissues"/>
</dbReference>
<dbReference type="GO" id="GO:0042995">
    <property type="term" value="C:cell projection"/>
    <property type="evidence" value="ECO:0007669"/>
    <property type="project" value="UniProtKB-SubCell"/>
</dbReference>
<dbReference type="GO" id="GO:0005737">
    <property type="term" value="C:cytoplasm"/>
    <property type="evidence" value="ECO:0007669"/>
    <property type="project" value="UniProtKB-KW"/>
</dbReference>
<dbReference type="GO" id="GO:0005856">
    <property type="term" value="C:cytoskeleton"/>
    <property type="evidence" value="ECO:0007669"/>
    <property type="project" value="UniProtKB-SubCell"/>
</dbReference>
<dbReference type="GO" id="GO:0003779">
    <property type="term" value="F:actin binding"/>
    <property type="evidence" value="ECO:0007669"/>
    <property type="project" value="UniProtKB-KW"/>
</dbReference>
<dbReference type="GO" id="GO:0005524">
    <property type="term" value="F:ATP binding"/>
    <property type="evidence" value="ECO:0007669"/>
    <property type="project" value="UniProtKB-KW"/>
</dbReference>
<dbReference type="CDD" id="cd10221">
    <property type="entry name" value="ASKHA_NBD_Arp3-like"/>
    <property type="match status" value="1"/>
</dbReference>
<dbReference type="FunFam" id="3.30.420.40:FF:000029">
    <property type="entry name" value="Actin-related protein 3"/>
    <property type="match status" value="1"/>
</dbReference>
<dbReference type="FunFam" id="3.30.420.40:FF:000315">
    <property type="entry name" value="Actin-related protein 3"/>
    <property type="match status" value="1"/>
</dbReference>
<dbReference type="FunFam" id="3.30.420.40:FF:000803">
    <property type="entry name" value="Actin-related protein 3"/>
    <property type="match status" value="1"/>
</dbReference>
<dbReference type="FunFam" id="3.90.640.10:FF:000006">
    <property type="entry name" value="Actin-related protein 3 (ARP3)"/>
    <property type="match status" value="1"/>
</dbReference>
<dbReference type="FunFam" id="2.30.36.70:FF:000002">
    <property type="entry name" value="actin-related protein 3 isoform X1"/>
    <property type="match status" value="1"/>
</dbReference>
<dbReference type="Gene3D" id="3.30.420.40">
    <property type="match status" value="2"/>
</dbReference>
<dbReference type="Gene3D" id="2.30.36.70">
    <property type="entry name" value="Actin, Chain A, domain 2"/>
    <property type="match status" value="1"/>
</dbReference>
<dbReference type="Gene3D" id="3.90.640.10">
    <property type="entry name" value="Actin, Chain A, domain 4"/>
    <property type="match status" value="1"/>
</dbReference>
<dbReference type="InterPro" id="IPR004000">
    <property type="entry name" value="Actin"/>
</dbReference>
<dbReference type="InterPro" id="IPR020902">
    <property type="entry name" value="Actin/actin-like_CS"/>
</dbReference>
<dbReference type="InterPro" id="IPR043129">
    <property type="entry name" value="ATPase_NBD"/>
</dbReference>
<dbReference type="PANTHER" id="PTHR11937">
    <property type="entry name" value="ACTIN"/>
    <property type="match status" value="1"/>
</dbReference>
<dbReference type="Pfam" id="PF00022">
    <property type="entry name" value="Actin"/>
    <property type="match status" value="1"/>
</dbReference>
<dbReference type="SMART" id="SM00268">
    <property type="entry name" value="ACTIN"/>
    <property type="match status" value="1"/>
</dbReference>
<dbReference type="SUPFAM" id="SSF53067">
    <property type="entry name" value="Actin-like ATPase domain"/>
    <property type="match status" value="2"/>
</dbReference>
<dbReference type="PROSITE" id="PS01132">
    <property type="entry name" value="ACTINS_ACT_LIKE"/>
    <property type="match status" value="1"/>
</dbReference>
<proteinExistence type="evidence at protein level"/>
<accession>Q641P0</accession>
<accession>Q7TSH1</accession>
<gene>
    <name type="primary">Actr3b</name>
</gene>
<sequence length="418" mass="47580">MAGSLPPCVVDCGTGYTKLGYAGNTEPQFIIPSCIAIRESAKVVDQAQRRVLRGVDDLDFFIGDEAIDKPTYATKWPIRHGIVEDWDLMERFMEQVVFKYLRAEPEDHYFLMTEPPLNTPENREYLAEIMFESFNVPGLYIAVQAVLALAASWTSRQVGERTLTGIVIDSGDGVTHVIPVAEGYVIGSCIKHIPIAGRDITYFIQQLLREREVGIPPEQSLETAKAIKEKYCYICPDIVREFAKYDVDPRKWIKQYTGINAINQKKFIIDVGYERFLGPEIFFHPEFANPDFMESISDVVDEVIQSCPIDVRRPLYKNVVLSGGSTMFRDFGRRLQRDLKRVVDARLKLSQELSGGRIKPKPVEVQVVTHHMQRYAVWFGGSMLASTPEFFQVCHTKKDYEEYGPSICRHNPVFGVMS</sequence>
<reference key="1">
    <citation type="journal article" date="2004" name="Genome Res.">
        <title>The status, quality, and expansion of the NIH full-length cDNA project: the Mammalian Gene Collection (MGC).</title>
        <authorList>
            <consortium name="The MGC Project Team"/>
        </authorList>
    </citation>
    <scope>NUCLEOTIDE SEQUENCE [LARGE SCALE MRNA] (ISOFORMS 1 AND 2)</scope>
    <source>
        <strain>C57BL/6J</strain>
        <tissue>Brain</tissue>
        <tissue>Embryo</tissue>
    </source>
</reference>
<reference key="2">
    <citation type="journal article" date="2010" name="Cell">
        <title>A tissue-specific atlas of mouse protein phosphorylation and expression.</title>
        <authorList>
            <person name="Huttlin E.L."/>
            <person name="Jedrychowski M.P."/>
            <person name="Elias J.E."/>
            <person name="Goswami T."/>
            <person name="Rad R."/>
            <person name="Beausoleil S.A."/>
            <person name="Villen J."/>
            <person name="Haas W."/>
            <person name="Sowa M.E."/>
            <person name="Gygi S.P."/>
        </authorList>
    </citation>
    <scope>IDENTIFICATION BY MASS SPECTROMETRY [LARGE SCALE ANALYSIS]</scope>
    <source>
        <tissue>Brain</tissue>
    </source>
</reference>
<keyword id="KW-0009">Actin-binding</keyword>
<keyword id="KW-0025">Alternative splicing</keyword>
<keyword id="KW-0067">ATP-binding</keyword>
<keyword id="KW-0966">Cell projection</keyword>
<keyword id="KW-0963">Cytoplasm</keyword>
<keyword id="KW-0206">Cytoskeleton</keyword>
<keyword id="KW-0547">Nucleotide-binding</keyword>
<keyword id="KW-1185">Reference proteome</keyword>
<comment type="function">
    <text evidence="1">Plays a role in the organization of the actin cytoskeleton. May function as ATP-binding component of the Arp2/3 complex which is involved in regulation of actin polymerization and together with an activating nucleation-promoting factor (NPF) mediates the formation of branched actin networks. May decrease the metastatic potential of tumors (By similarity).</text>
</comment>
<comment type="subunit">
    <text evidence="1">Interacts with the Arp2/3 complex composed of ARP2, ARP3, ARPC1B, ARPC1B/p41-ARC, ARPC2/p34-ARC, ARPC3/p21-ARC, ARPC4/p20-ARC and ARPC5/p16-ARC.</text>
</comment>
<comment type="subcellular location">
    <subcellularLocation>
        <location evidence="1">Cytoplasm</location>
        <location evidence="1">Cytoskeleton</location>
    </subcellularLocation>
    <subcellularLocation>
        <location evidence="1">Cell projection</location>
    </subcellularLocation>
</comment>
<comment type="alternative products">
    <event type="alternative splicing"/>
    <isoform>
        <id>Q641P0-1</id>
        <name>1</name>
        <sequence type="displayed"/>
    </isoform>
    <isoform>
        <id>Q641P0-2</id>
        <name>2</name>
        <sequence type="described" ref="VSP_034419"/>
    </isoform>
</comment>
<comment type="similarity">
    <text evidence="3">Belongs to the actin family. ARP3 subfamily.</text>
</comment>
<name>ARP3B_MOUSE</name>